<comment type="catalytic activity">
    <reaction>
        <text>Hydrolysis of terminal non-reducing beta-D-galactose residues in beta-D-galactosides.</text>
        <dbReference type="EC" id="3.2.1.23"/>
    </reaction>
</comment>
<comment type="subcellular location">
    <subcellularLocation>
        <location evidence="4">Secreted</location>
        <location evidence="4">Extracellular space</location>
        <location evidence="4">Apoplast</location>
    </subcellularLocation>
</comment>
<comment type="alternative products">
    <event type="alternative splicing"/>
    <isoform>
        <id>Q93Z24-1</id>
        <name>1</name>
        <sequence type="displayed"/>
    </isoform>
    <isoform>
        <id>Q93Z24-2</id>
        <name>2</name>
        <sequence type="described" ref="VSP_026468"/>
    </isoform>
</comment>
<comment type="tissue specificity">
    <text evidence="2 3">Ubiquitous, with higher expression levels in roots and siliques.</text>
</comment>
<comment type="similarity">
    <text evidence="4">Belongs to the glycosyl hydrolase 35 family.</text>
</comment>
<comment type="sequence caution" evidence="4">
    <conflict type="erroneous gene model prediction">
        <sequence resource="EMBL-CDS" id="AAD55646"/>
    </conflict>
</comment>
<sequence length="697" mass="78640">MAMTSWPSTGRQRRHQLASMLLLVLVVVGIYVPVFALLPSLSYTPQSLPSAIPQDEKMISRKFYIKDDNFWKDGNRFQIIGGDLHYFRVLPEYWEDRLLRANALGLNTIQVYVPWNLHEPKPGKMVFEGIGDLVSFLKLCEKLDFLVMLRAGPYICGEWDLGGFPAWLLAVKPRLQLRTSDPVYLKLVERWWDVLLPKVFPLLYSNGGPVIMVQIENEYGSYGNDKAYLRKLVSMARGHLGDDIIVYTTDGGTKETLDKGTVPVADVYSAVDFSTGDDPWPIFKLQKKFNAPGRSPPLSSEFYTGWLTHWGEKITKTDAEFTAASLEKILSRNGSAVLYMVHGGTNFGFYNGANTGSEESDYKPDLTSYDYDAPIKESGDIDNPKFQALQRVIKKYNASPHPISPSNKQRKAYGSIKMQMTTSLFDLVRMTDPADVITSANPISMESVGQMFGFLLYESSYIAKKSGNTLRIPKVHDRAQVFVSCLSQDVDVGVLRYIGTTERWNNQPISLPTIECTTNTSLFILVENMGRVNYGPYIFDDKGILSSVYLDGQILHGWKMIPIPFHNLNQEPNLTFEMQHTKNRSKKFELTNDVGRKEPALFAGEFSINSEEEIKDTYLSFNGWGKGVAFVNEFNIGRYWPSVGPQCNLYVPAPLLKRGKNTLVVFELESPHLELSLEAVDHQDFTCGSNVSKVNQL</sequence>
<feature type="signal peptide" evidence="1">
    <location>
        <begin position="1"/>
        <end position="35"/>
    </location>
</feature>
<feature type="chain" id="PRO_0000293096" description="Beta-galactosidase 17">
    <location>
        <begin position="36"/>
        <end position="697"/>
    </location>
</feature>
<feature type="active site" description="Proton donor" evidence="1">
    <location>
        <position position="218"/>
    </location>
</feature>
<feature type="active site" description="Nucleophile" evidence="1">
    <location>
        <position position="301"/>
    </location>
</feature>
<feature type="glycosylation site" description="N-linked (GlcNAc...) asparagine" evidence="1">
    <location>
        <position position="333"/>
    </location>
</feature>
<feature type="glycosylation site" description="N-linked (GlcNAc...) asparagine" evidence="1">
    <location>
        <position position="519"/>
    </location>
</feature>
<feature type="glycosylation site" description="N-linked (GlcNAc...) asparagine" evidence="1">
    <location>
        <position position="573"/>
    </location>
</feature>
<feature type="glycosylation site" description="N-linked (GlcNAc...) asparagine" evidence="1">
    <location>
        <position position="583"/>
    </location>
</feature>
<feature type="glycosylation site" description="N-linked (GlcNAc...) asparagine" evidence="1">
    <location>
        <position position="690"/>
    </location>
</feature>
<feature type="splice variant" id="VSP_026468" description="In isoform 2." evidence="4">
    <original>MAMTSWPSTGRQRRHQLASMLLLVLVVVGIYVPVFALLPSLSYTPQSLPSAIPQDEKMISRKFYIKDDNFWKDGNRFQIIGGDLHYFRVLPE</original>
    <variation>MTISGKMGIVFRSLVVICITFVFFQRLWMQ</variation>
    <location>
        <begin position="1"/>
        <end position="92"/>
    </location>
</feature>
<gene>
    <name type="primary">BGAL17</name>
    <name type="ordered locus">At1g72990</name>
    <name type="ORF">F3N23.19</name>
</gene>
<accession>Q93Z24</accession>
<accession>Q2V4C9</accession>
<accession>Q9SSM8</accession>
<protein>
    <recommendedName>
        <fullName>Beta-galactosidase 17</fullName>
        <shortName>Lactase 17</shortName>
        <ecNumber>3.2.1.23</ecNumber>
    </recommendedName>
</protein>
<keyword id="KW-0025">Alternative splicing</keyword>
<keyword id="KW-0052">Apoplast</keyword>
<keyword id="KW-0325">Glycoprotein</keyword>
<keyword id="KW-0326">Glycosidase</keyword>
<keyword id="KW-0378">Hydrolase</keyword>
<keyword id="KW-1185">Reference proteome</keyword>
<keyword id="KW-0964">Secreted</keyword>
<keyword id="KW-0732">Signal</keyword>
<proteinExistence type="evidence at transcript level"/>
<organism>
    <name type="scientific">Arabidopsis thaliana</name>
    <name type="common">Mouse-ear cress</name>
    <dbReference type="NCBI Taxonomy" id="3702"/>
    <lineage>
        <taxon>Eukaryota</taxon>
        <taxon>Viridiplantae</taxon>
        <taxon>Streptophyta</taxon>
        <taxon>Embryophyta</taxon>
        <taxon>Tracheophyta</taxon>
        <taxon>Spermatophyta</taxon>
        <taxon>Magnoliopsida</taxon>
        <taxon>eudicotyledons</taxon>
        <taxon>Gunneridae</taxon>
        <taxon>Pentapetalae</taxon>
        <taxon>rosids</taxon>
        <taxon>malvids</taxon>
        <taxon>Brassicales</taxon>
        <taxon>Brassicaceae</taxon>
        <taxon>Camelineae</taxon>
        <taxon>Arabidopsis</taxon>
    </lineage>
</organism>
<evidence type="ECO:0000255" key="1"/>
<evidence type="ECO:0000269" key="2">
    <source>
    </source>
</evidence>
<evidence type="ECO:0000269" key="3">
    <source>
    </source>
</evidence>
<evidence type="ECO:0000305" key="4"/>
<dbReference type="EC" id="3.2.1.23"/>
<dbReference type="EMBL" id="AC008017">
    <property type="protein sequence ID" value="AAD55646.1"/>
    <property type="status" value="ALT_SEQ"/>
    <property type="molecule type" value="Genomic_DNA"/>
</dbReference>
<dbReference type="EMBL" id="CP002684">
    <property type="protein sequence ID" value="AEE35400.1"/>
    <property type="molecule type" value="Genomic_DNA"/>
</dbReference>
<dbReference type="EMBL" id="CP002684">
    <property type="protein sequence ID" value="AEE35401.1"/>
    <property type="molecule type" value="Genomic_DNA"/>
</dbReference>
<dbReference type="EMBL" id="CP002684">
    <property type="protein sequence ID" value="ANM58944.1"/>
    <property type="molecule type" value="Genomic_DNA"/>
</dbReference>
<dbReference type="EMBL" id="AY058198">
    <property type="protein sequence ID" value="AAL25611.1"/>
    <property type="molecule type" value="mRNA"/>
</dbReference>
<dbReference type="EMBL" id="AY142008">
    <property type="protein sequence ID" value="AAM98272.1"/>
    <property type="molecule type" value="mRNA"/>
</dbReference>
<dbReference type="PIR" id="C96755">
    <property type="entry name" value="C96755"/>
</dbReference>
<dbReference type="RefSeq" id="NP_001031273.1">
    <molecule id="Q93Z24-2"/>
    <property type="nucleotide sequence ID" value="NM_001036196.2"/>
</dbReference>
<dbReference type="RefSeq" id="NP_001321343.1">
    <molecule id="Q93Z24-1"/>
    <property type="nucleotide sequence ID" value="NM_001334560.1"/>
</dbReference>
<dbReference type="RefSeq" id="NP_565051.1">
    <molecule id="Q93Z24-1"/>
    <property type="nucleotide sequence ID" value="NM_105957.3"/>
</dbReference>
<dbReference type="SMR" id="Q93Z24"/>
<dbReference type="FunCoup" id="Q93Z24">
    <property type="interactions" value="1280"/>
</dbReference>
<dbReference type="STRING" id="3702.Q93Z24"/>
<dbReference type="CAZy" id="GH35">
    <property type="family name" value="Glycoside Hydrolase Family 35"/>
</dbReference>
<dbReference type="GlyCosmos" id="Q93Z24">
    <property type="glycosylation" value="5 sites, No reported glycans"/>
</dbReference>
<dbReference type="GlyGen" id="Q93Z24">
    <property type="glycosylation" value="5 sites"/>
</dbReference>
<dbReference type="PaxDb" id="3702-AT1G72990.1"/>
<dbReference type="ProteomicsDB" id="240657">
    <molecule id="Q93Z24-1"/>
</dbReference>
<dbReference type="EnsemblPlants" id="AT1G72990.1">
    <molecule id="Q93Z24-1"/>
    <property type="protein sequence ID" value="AT1G72990.1"/>
    <property type="gene ID" value="AT1G72990"/>
</dbReference>
<dbReference type="EnsemblPlants" id="AT1G72990.2">
    <molecule id="Q93Z24-2"/>
    <property type="protein sequence ID" value="AT1G72990.2"/>
    <property type="gene ID" value="AT1G72990"/>
</dbReference>
<dbReference type="EnsemblPlants" id="AT1G72990.4">
    <molecule id="Q93Z24-1"/>
    <property type="protein sequence ID" value="AT1G72990.4"/>
    <property type="gene ID" value="AT1G72990"/>
</dbReference>
<dbReference type="GeneID" id="843630"/>
<dbReference type="Gramene" id="AT1G72990.1">
    <molecule id="Q93Z24-1"/>
    <property type="protein sequence ID" value="AT1G72990.1"/>
    <property type="gene ID" value="AT1G72990"/>
</dbReference>
<dbReference type="Gramene" id="AT1G72990.2">
    <molecule id="Q93Z24-2"/>
    <property type="protein sequence ID" value="AT1G72990.2"/>
    <property type="gene ID" value="AT1G72990"/>
</dbReference>
<dbReference type="Gramene" id="AT1G72990.4">
    <molecule id="Q93Z24-1"/>
    <property type="protein sequence ID" value="AT1G72990.4"/>
    <property type="gene ID" value="AT1G72990"/>
</dbReference>
<dbReference type="KEGG" id="ath:AT1G72990"/>
<dbReference type="Araport" id="AT1G72990"/>
<dbReference type="TAIR" id="AT1G72990">
    <property type="gene designation" value="BGAL17"/>
</dbReference>
<dbReference type="eggNOG" id="KOG0496">
    <property type="taxonomic scope" value="Eukaryota"/>
</dbReference>
<dbReference type="HOGENOM" id="CLU_007853_7_2_1"/>
<dbReference type="InParanoid" id="Q93Z24"/>
<dbReference type="PhylomeDB" id="Q93Z24"/>
<dbReference type="BioCyc" id="ARA:AT1G72990-MONOMER"/>
<dbReference type="PRO" id="PR:Q93Z24"/>
<dbReference type="Proteomes" id="UP000006548">
    <property type="component" value="Chromosome 1"/>
</dbReference>
<dbReference type="ExpressionAtlas" id="Q93Z24">
    <property type="expression patterns" value="baseline and differential"/>
</dbReference>
<dbReference type="GO" id="GO:0048046">
    <property type="term" value="C:apoplast"/>
    <property type="evidence" value="ECO:0007669"/>
    <property type="project" value="UniProtKB-SubCell"/>
</dbReference>
<dbReference type="GO" id="GO:0004565">
    <property type="term" value="F:beta-galactosidase activity"/>
    <property type="evidence" value="ECO:0007669"/>
    <property type="project" value="UniProtKB-EC"/>
</dbReference>
<dbReference type="GO" id="GO:0005975">
    <property type="term" value="P:carbohydrate metabolic process"/>
    <property type="evidence" value="ECO:0007669"/>
    <property type="project" value="InterPro"/>
</dbReference>
<dbReference type="FunFam" id="2.60.120.260:FF:000021">
    <property type="entry name" value="Beta-galactosidase"/>
    <property type="match status" value="1"/>
</dbReference>
<dbReference type="FunFam" id="3.20.20.80:FF:000115">
    <property type="entry name" value="Beta-galactosidase"/>
    <property type="match status" value="1"/>
</dbReference>
<dbReference type="Gene3D" id="2.60.120.260">
    <property type="entry name" value="Galactose-binding domain-like"/>
    <property type="match status" value="2"/>
</dbReference>
<dbReference type="Gene3D" id="3.20.20.80">
    <property type="entry name" value="Glycosidases"/>
    <property type="match status" value="1"/>
</dbReference>
<dbReference type="InterPro" id="IPR026283">
    <property type="entry name" value="B-gal_1-like"/>
</dbReference>
<dbReference type="InterPro" id="IPR048912">
    <property type="entry name" value="BetaGal1-like_ABD1"/>
</dbReference>
<dbReference type="InterPro" id="IPR048913">
    <property type="entry name" value="BetaGal_gal-bd"/>
</dbReference>
<dbReference type="InterPro" id="IPR008979">
    <property type="entry name" value="Galactose-bd-like_sf"/>
</dbReference>
<dbReference type="InterPro" id="IPR031330">
    <property type="entry name" value="Gly_Hdrlase_35_cat"/>
</dbReference>
<dbReference type="InterPro" id="IPR019801">
    <property type="entry name" value="Glyco_hydro_35_CS"/>
</dbReference>
<dbReference type="InterPro" id="IPR001944">
    <property type="entry name" value="Glycoside_Hdrlase_35"/>
</dbReference>
<dbReference type="InterPro" id="IPR017853">
    <property type="entry name" value="Glycoside_hydrolase_SF"/>
</dbReference>
<dbReference type="PANTHER" id="PTHR23421">
    <property type="entry name" value="BETA-GALACTOSIDASE RELATED"/>
    <property type="match status" value="1"/>
</dbReference>
<dbReference type="Pfam" id="PF21317">
    <property type="entry name" value="BetaGal_ABD_1"/>
    <property type="match status" value="1"/>
</dbReference>
<dbReference type="Pfam" id="PF21467">
    <property type="entry name" value="BetaGal_gal-bd"/>
    <property type="match status" value="1"/>
</dbReference>
<dbReference type="Pfam" id="PF01301">
    <property type="entry name" value="Glyco_hydro_35"/>
    <property type="match status" value="1"/>
</dbReference>
<dbReference type="PIRSF" id="PIRSF006336">
    <property type="entry name" value="B-gal"/>
    <property type="match status" value="1"/>
</dbReference>
<dbReference type="PRINTS" id="PR00742">
    <property type="entry name" value="GLHYDRLASE35"/>
</dbReference>
<dbReference type="SUPFAM" id="SSF51445">
    <property type="entry name" value="(Trans)glycosidases"/>
    <property type="match status" value="1"/>
</dbReference>
<dbReference type="SUPFAM" id="SSF49785">
    <property type="entry name" value="Galactose-binding domain-like"/>
    <property type="match status" value="1"/>
</dbReference>
<dbReference type="PROSITE" id="PS01182">
    <property type="entry name" value="GLYCOSYL_HYDROL_F35"/>
    <property type="match status" value="1"/>
</dbReference>
<name>BGA17_ARATH</name>
<reference key="1">
    <citation type="journal article" date="2000" name="Nature">
        <title>Sequence and analysis of chromosome 1 of the plant Arabidopsis thaliana.</title>
        <authorList>
            <person name="Theologis A."/>
            <person name="Ecker J.R."/>
            <person name="Palm C.J."/>
            <person name="Federspiel N.A."/>
            <person name="Kaul S."/>
            <person name="White O."/>
            <person name="Alonso J."/>
            <person name="Altafi H."/>
            <person name="Araujo R."/>
            <person name="Bowman C.L."/>
            <person name="Brooks S.Y."/>
            <person name="Buehler E."/>
            <person name="Chan A."/>
            <person name="Chao Q."/>
            <person name="Chen H."/>
            <person name="Cheuk R.F."/>
            <person name="Chin C.W."/>
            <person name="Chung M.K."/>
            <person name="Conn L."/>
            <person name="Conway A.B."/>
            <person name="Conway A.R."/>
            <person name="Creasy T.H."/>
            <person name="Dewar K."/>
            <person name="Dunn P."/>
            <person name="Etgu P."/>
            <person name="Feldblyum T.V."/>
            <person name="Feng J.-D."/>
            <person name="Fong B."/>
            <person name="Fujii C.Y."/>
            <person name="Gill J.E."/>
            <person name="Goldsmith A.D."/>
            <person name="Haas B."/>
            <person name="Hansen N.F."/>
            <person name="Hughes B."/>
            <person name="Huizar L."/>
            <person name="Hunter J.L."/>
            <person name="Jenkins J."/>
            <person name="Johnson-Hopson C."/>
            <person name="Khan S."/>
            <person name="Khaykin E."/>
            <person name="Kim C.J."/>
            <person name="Koo H.L."/>
            <person name="Kremenetskaia I."/>
            <person name="Kurtz D.B."/>
            <person name="Kwan A."/>
            <person name="Lam B."/>
            <person name="Langin-Hooper S."/>
            <person name="Lee A."/>
            <person name="Lee J.M."/>
            <person name="Lenz C.A."/>
            <person name="Li J.H."/>
            <person name="Li Y.-P."/>
            <person name="Lin X."/>
            <person name="Liu S.X."/>
            <person name="Liu Z.A."/>
            <person name="Luros J.S."/>
            <person name="Maiti R."/>
            <person name="Marziali A."/>
            <person name="Militscher J."/>
            <person name="Miranda M."/>
            <person name="Nguyen M."/>
            <person name="Nierman W.C."/>
            <person name="Osborne B.I."/>
            <person name="Pai G."/>
            <person name="Peterson J."/>
            <person name="Pham P.K."/>
            <person name="Rizzo M."/>
            <person name="Rooney T."/>
            <person name="Rowley D."/>
            <person name="Sakano H."/>
            <person name="Salzberg S.L."/>
            <person name="Schwartz J.R."/>
            <person name="Shinn P."/>
            <person name="Southwick A.M."/>
            <person name="Sun H."/>
            <person name="Tallon L.J."/>
            <person name="Tambunga G."/>
            <person name="Toriumi M.J."/>
            <person name="Town C.D."/>
            <person name="Utterback T."/>
            <person name="Van Aken S."/>
            <person name="Vaysberg M."/>
            <person name="Vysotskaia V.S."/>
            <person name="Walker M."/>
            <person name="Wu D."/>
            <person name="Yu G."/>
            <person name="Fraser C.M."/>
            <person name="Venter J.C."/>
            <person name="Davis R.W."/>
        </authorList>
    </citation>
    <scope>NUCLEOTIDE SEQUENCE [LARGE SCALE GENOMIC DNA]</scope>
    <source>
        <strain>cv. Columbia</strain>
    </source>
</reference>
<reference key="2">
    <citation type="journal article" date="2017" name="Plant J.">
        <title>Araport11: a complete reannotation of the Arabidopsis thaliana reference genome.</title>
        <authorList>
            <person name="Cheng C.Y."/>
            <person name="Krishnakumar V."/>
            <person name="Chan A.P."/>
            <person name="Thibaud-Nissen F."/>
            <person name="Schobel S."/>
            <person name="Town C.D."/>
        </authorList>
    </citation>
    <scope>GENOME REANNOTATION</scope>
    <source>
        <strain>cv. Columbia</strain>
    </source>
</reference>
<reference key="3">
    <citation type="journal article" date="2003" name="Science">
        <title>Empirical analysis of transcriptional activity in the Arabidopsis genome.</title>
        <authorList>
            <person name="Yamada K."/>
            <person name="Lim J."/>
            <person name="Dale J.M."/>
            <person name="Chen H."/>
            <person name="Shinn P."/>
            <person name="Palm C.J."/>
            <person name="Southwick A.M."/>
            <person name="Wu H.C."/>
            <person name="Kim C.J."/>
            <person name="Nguyen M."/>
            <person name="Pham P.K."/>
            <person name="Cheuk R.F."/>
            <person name="Karlin-Newmann G."/>
            <person name="Liu S.X."/>
            <person name="Lam B."/>
            <person name="Sakano H."/>
            <person name="Wu T."/>
            <person name="Yu G."/>
            <person name="Miranda M."/>
            <person name="Quach H.L."/>
            <person name="Tripp M."/>
            <person name="Chang C.H."/>
            <person name="Lee J.M."/>
            <person name="Toriumi M.J."/>
            <person name="Chan M.M."/>
            <person name="Tang C.C."/>
            <person name="Onodera C.S."/>
            <person name="Deng J.M."/>
            <person name="Akiyama K."/>
            <person name="Ansari Y."/>
            <person name="Arakawa T."/>
            <person name="Banh J."/>
            <person name="Banno F."/>
            <person name="Bowser L."/>
            <person name="Brooks S.Y."/>
            <person name="Carninci P."/>
            <person name="Chao Q."/>
            <person name="Choy N."/>
            <person name="Enju A."/>
            <person name="Goldsmith A.D."/>
            <person name="Gurjal M."/>
            <person name="Hansen N.F."/>
            <person name="Hayashizaki Y."/>
            <person name="Johnson-Hopson C."/>
            <person name="Hsuan V.W."/>
            <person name="Iida K."/>
            <person name="Karnes M."/>
            <person name="Khan S."/>
            <person name="Koesema E."/>
            <person name="Ishida J."/>
            <person name="Jiang P.X."/>
            <person name="Jones T."/>
            <person name="Kawai J."/>
            <person name="Kamiya A."/>
            <person name="Meyers C."/>
            <person name="Nakajima M."/>
            <person name="Narusaka M."/>
            <person name="Seki M."/>
            <person name="Sakurai T."/>
            <person name="Satou M."/>
            <person name="Tamse R."/>
            <person name="Vaysberg M."/>
            <person name="Wallender E.K."/>
            <person name="Wong C."/>
            <person name="Yamamura Y."/>
            <person name="Yuan S."/>
            <person name="Shinozaki K."/>
            <person name="Davis R.W."/>
            <person name="Theologis A."/>
            <person name="Ecker J.R."/>
        </authorList>
    </citation>
    <scope>NUCLEOTIDE SEQUENCE [LARGE SCALE MRNA] (ISOFORM 1)</scope>
    <source>
        <strain>cv. Columbia</strain>
    </source>
</reference>
<reference key="4">
    <citation type="journal article" date="2006" name="Plant Cell Physiol.">
        <title>Apoplastic glycosidases active against xyloglucan oligosaccharides of Arabidopsis thaliana.</title>
        <authorList>
            <person name="Iglesias N."/>
            <person name="Abelenda J.A."/>
            <person name="Rodino M."/>
            <person name="Sampedro J."/>
            <person name="Revilla G."/>
            <person name="Zarra I."/>
        </authorList>
    </citation>
    <scope>TISSUE SPECIFICITY</scope>
</reference>
<reference key="5">
    <citation type="journal article" date="2007" name="Phytochemistry">
        <title>Functional genomic analysis of Arabidopsis thaliana glycoside hydrolase family 35.</title>
        <authorList>
            <person name="Ahn Y.O."/>
            <person name="Zheng M."/>
            <person name="Bevan D.R."/>
            <person name="Esen A."/>
            <person name="Shiu S.-H."/>
            <person name="Benson J."/>
            <person name="Peng H.-P."/>
            <person name="Miller J.T."/>
            <person name="Cheng C.-L."/>
            <person name="Poulton J.E."/>
            <person name="Shih M.-C."/>
        </authorList>
    </citation>
    <scope>TISSUE SPECIFICITY</scope>
    <scope>GENE FAMILY</scope>
    <scope>NOMENCLATURE</scope>
</reference>